<proteinExistence type="evidence at transcript level"/>
<sequence>MMKCLFLLCLCLLPIVVFSSTFTSQNLIDLPSESPLPKPVLDTNGKELNPNSSYRIISIGRGALGGDVYLGKSPNSDGPCPDGVFRYNSDVGPSGTFVRFIPLSGGIFEDQLLNIQFNIATVKLCVSYTIWKVGNLNAYFRTMLLETGGTIGQADSSYFKIVKLSNFGYNLLYCPITPPFLCPFCRDDNFCAKVGVVIQNGKRRLALVNENPLDVLFQEV</sequence>
<feature type="signal peptide" evidence="1">
    <location>
        <begin position="1"/>
        <end position="23"/>
    </location>
</feature>
<feature type="propeptide" id="PRO_0000016912" evidence="1">
    <location>
        <begin position="24"/>
        <end position="32"/>
    </location>
</feature>
<feature type="chain" id="PRO_0000016913" description="Aspartic protease inhibitor 2">
    <location>
        <begin position="33"/>
        <end position="220"/>
    </location>
</feature>
<feature type="short sequence motif" description="Vacuolar targeting signal" evidence="1">
    <location>
        <begin position="26"/>
        <end position="31"/>
    </location>
</feature>
<feature type="site" description="Reactive bond for trypsin" evidence="1">
    <location>
        <begin position="99"/>
        <end position="100"/>
    </location>
</feature>
<feature type="site" description="Reactive bond for chymotrypsin" evidence="1">
    <location>
        <begin position="144"/>
        <end position="145"/>
    </location>
</feature>
<feature type="glycosylation site" description="N-linked (GlcNAc...) asparagine" evidence="2">
    <location>
        <position position="51"/>
    </location>
</feature>
<feature type="disulfide bond" evidence="1">
    <location>
        <begin position="80"/>
        <end position="125"/>
    </location>
</feature>
<feature type="disulfide bond" evidence="1">
    <location>
        <begin position="174"/>
        <end position="185"/>
    </location>
</feature>
<dbReference type="EMBL" id="X74985">
    <property type="protein sequence ID" value="CAA52919.1"/>
    <property type="molecule type" value="Genomic_DNA"/>
</dbReference>
<dbReference type="PIR" id="S52656">
    <property type="entry name" value="S52656"/>
</dbReference>
<dbReference type="SMR" id="Q43646"/>
<dbReference type="STRING" id="4113.Q43646"/>
<dbReference type="MEROPS" id="I03.002"/>
<dbReference type="InParanoid" id="Q43646"/>
<dbReference type="Proteomes" id="UP000011115">
    <property type="component" value="Unassembled WGS sequence"/>
</dbReference>
<dbReference type="ExpressionAtlas" id="Q43646">
    <property type="expression patterns" value="baseline and differential"/>
</dbReference>
<dbReference type="GO" id="GO:0005773">
    <property type="term" value="C:vacuole"/>
    <property type="evidence" value="ECO:0007669"/>
    <property type="project" value="UniProtKB-SubCell"/>
</dbReference>
<dbReference type="GO" id="GO:0019828">
    <property type="term" value="F:aspartic-type endopeptidase inhibitor activity"/>
    <property type="evidence" value="ECO:0007669"/>
    <property type="project" value="UniProtKB-KW"/>
</dbReference>
<dbReference type="GO" id="GO:0004867">
    <property type="term" value="F:serine-type endopeptidase inhibitor activity"/>
    <property type="evidence" value="ECO:0007669"/>
    <property type="project" value="UniProtKB-KW"/>
</dbReference>
<dbReference type="CDD" id="cd23372">
    <property type="entry name" value="beta-trefoil_STI_CPI-like"/>
    <property type="match status" value="1"/>
</dbReference>
<dbReference type="Gene3D" id="2.80.10.50">
    <property type="match status" value="1"/>
</dbReference>
<dbReference type="InterPro" id="IPR011065">
    <property type="entry name" value="Kunitz_inhibitor_STI-like_sf"/>
</dbReference>
<dbReference type="InterPro" id="IPR002160">
    <property type="entry name" value="Prot_inh_Kunz-lg"/>
</dbReference>
<dbReference type="PANTHER" id="PTHR33107">
    <property type="entry name" value="KUNITZ TRYPSIN INHIBITOR 2"/>
    <property type="match status" value="1"/>
</dbReference>
<dbReference type="PANTHER" id="PTHR33107:SF38">
    <property type="entry name" value="SERINE PROTEASE INHIBITOR 5"/>
    <property type="match status" value="1"/>
</dbReference>
<dbReference type="Pfam" id="PF00197">
    <property type="entry name" value="Kunitz_legume"/>
    <property type="match status" value="1"/>
</dbReference>
<dbReference type="PRINTS" id="PR00291">
    <property type="entry name" value="KUNITZINHBTR"/>
</dbReference>
<dbReference type="SMART" id="SM00452">
    <property type="entry name" value="STI"/>
    <property type="match status" value="1"/>
</dbReference>
<dbReference type="SUPFAM" id="SSF50386">
    <property type="entry name" value="STI-like"/>
    <property type="match status" value="1"/>
</dbReference>
<dbReference type="PROSITE" id="PS00283">
    <property type="entry name" value="SOYBEAN_KUNITZ"/>
    <property type="match status" value="1"/>
</dbReference>
<reference key="1">
    <citation type="journal article" date="1994" name="Plant Mol. Biol.">
        <title>Cloning and characterization of a cathepsin D inhibitor gene from Solanum tuberosum L.</title>
        <authorList>
            <person name="Herbers K."/>
            <person name="Prat S."/>
            <person name="Willmitzer L."/>
        </authorList>
    </citation>
    <scope>NUCLEOTIDE SEQUENCE [GENOMIC DNA]</scope>
    <source>
        <strain>cv. AM 80.5793</strain>
        <tissue>Leaf</tissue>
    </source>
</reference>
<evidence type="ECO:0000250" key="1"/>
<evidence type="ECO:0000255" key="2"/>
<evidence type="ECO:0000305" key="3"/>
<comment type="function">
    <text>Inhibitor of cathepsin D (aspartic protease). May also inhibit trypsin and chymotrypsin (serine proteases). Protects the plant by inhibiting proteases of invading organisms.</text>
</comment>
<comment type="subcellular location">
    <subcellularLocation>
        <location evidence="1">Vacuole</location>
    </subcellularLocation>
</comment>
<comment type="tissue specificity">
    <text>Tubers.</text>
</comment>
<comment type="induction">
    <text>Not induced by abscisic acid, jasmonic acid and wounding.</text>
</comment>
<comment type="similarity">
    <text evidence="3">Belongs to the protease inhibitor I3 (leguminous Kunitz-type inhibitor) family.</text>
</comment>
<protein>
    <recommendedName>
        <fullName>Aspartic protease inhibitor 2</fullName>
    </recommendedName>
    <alternativeName>
        <fullName>CathIhn</fullName>
    </alternativeName>
    <alternativeName>
        <fullName>Cathepsin D inhibitor</fullName>
        <shortName>CathDinh</shortName>
    </alternativeName>
</protein>
<keyword id="KW-0062">Aspartic protease inhibitor</keyword>
<keyword id="KW-1015">Disulfide bond</keyword>
<keyword id="KW-0325">Glycoprotein</keyword>
<keyword id="KW-0646">Protease inhibitor</keyword>
<keyword id="KW-1185">Reference proteome</keyword>
<keyword id="KW-0722">Serine protease inhibitor</keyword>
<keyword id="KW-0732">Signal</keyword>
<keyword id="KW-0926">Vacuole</keyword>
<accession>Q43646</accession>
<organism>
    <name type="scientific">Solanum tuberosum</name>
    <name type="common">Potato</name>
    <dbReference type="NCBI Taxonomy" id="4113"/>
    <lineage>
        <taxon>Eukaryota</taxon>
        <taxon>Viridiplantae</taxon>
        <taxon>Streptophyta</taxon>
        <taxon>Embryophyta</taxon>
        <taxon>Tracheophyta</taxon>
        <taxon>Spermatophyta</taxon>
        <taxon>Magnoliopsida</taxon>
        <taxon>eudicotyledons</taxon>
        <taxon>Gunneridae</taxon>
        <taxon>Pentapetalae</taxon>
        <taxon>asterids</taxon>
        <taxon>lamiids</taxon>
        <taxon>Solanales</taxon>
        <taxon>Solanaceae</taxon>
        <taxon>Solanoideae</taxon>
        <taxon>Solaneae</taxon>
        <taxon>Solanum</taxon>
    </lineage>
</organism>
<name>API2_SOLTU</name>